<protein>
    <recommendedName>
        <fullName>Sperm-specific basic nuclear protein SP4</fullName>
    </recommendedName>
</protein>
<dbReference type="EMBL" id="D00916">
    <property type="protein sequence ID" value="BAA00762.1"/>
    <property type="molecule type" value="mRNA"/>
</dbReference>
<dbReference type="EMBL" id="D45253">
    <property type="protein sequence ID" value="BAA08209.1"/>
    <property type="molecule type" value="Genomic_DNA"/>
</dbReference>
<dbReference type="EMBL" id="D45253">
    <property type="protein sequence ID" value="BAA08210.1"/>
    <property type="molecule type" value="Genomic_DNA"/>
</dbReference>
<dbReference type="EMBL" id="D45253">
    <property type="protein sequence ID" value="BAA08211.1"/>
    <property type="molecule type" value="Genomic_DNA"/>
</dbReference>
<dbReference type="PIR" id="JH0404">
    <property type="entry name" value="JH0404"/>
</dbReference>
<dbReference type="PIR" id="S65036">
    <property type="entry name" value="S65036"/>
</dbReference>
<dbReference type="RefSeq" id="NP_001081230.1">
    <property type="nucleotide sequence ID" value="NM_001087761.2"/>
</dbReference>
<dbReference type="GeneID" id="397723"/>
<dbReference type="KEGG" id="xla:397723"/>
<dbReference type="CTD" id="397723"/>
<dbReference type="Proteomes" id="UP000186698">
    <property type="component" value="Chromosome 3L"/>
</dbReference>
<dbReference type="Bgee" id="397723">
    <property type="expression patterns" value="Expressed in testis and 8 other cell types or tissues"/>
</dbReference>
<dbReference type="GO" id="GO:0005634">
    <property type="term" value="C:nucleus"/>
    <property type="evidence" value="ECO:0007669"/>
    <property type="project" value="UniProtKB-SubCell"/>
</dbReference>
<evidence type="ECO:0000256" key="1">
    <source>
        <dbReference type="SAM" id="MobiDB-lite"/>
    </source>
</evidence>
<evidence type="ECO:0000269" key="2">
    <source>
    </source>
</evidence>
<evidence type="ECO:0000305" key="3"/>
<reference key="1">
    <citation type="journal article" date="1991" name="Exp. Cell Res.">
        <title>Isolation of cDNA for a Xenopus sperm-specific basic nuclear protein (SP4) and evidence for expression of SP4 mRNA in primary spermatocytes.</title>
        <authorList>
            <person name="Hiyoshi H."/>
            <person name="Uno S."/>
            <person name="Yokota T."/>
            <person name="Katagiri C."/>
            <person name="Nishida H."/>
            <person name="Takai M."/>
            <person name="Agata K."/>
            <person name="Eguchi G."/>
            <person name="Abe S."/>
        </authorList>
    </citation>
    <scope>NUCLEOTIDE SEQUENCE [MRNA]</scope>
    <scope>PROTEIN SEQUENCE OF 2-44 AND 65-79</scope>
    <scope>DEVELOPMENTAL STAGE</scope>
    <source>
        <tissue>Round spermatid</tissue>
    </source>
</reference>
<reference key="2">
    <citation type="journal article" date="1995" name="Biochim. Biophys. Acta">
        <title>Structure of genes for sperm-specific nuclear basic protein (SP4) in Xenopus leavis.</title>
        <authorList>
            <person name="Mita K."/>
            <person name="Ariyoshi N."/>
            <person name="Abe S."/>
            <person name="Takamune K."/>
            <person name="Katagiri C."/>
        </authorList>
    </citation>
    <scope>NUCLEOTIDE SEQUENCE [GENOMIC DNA] (SP4-A; SP4-B AND SP4-C)</scope>
    <source>
        <strain>J</strain>
    </source>
</reference>
<comment type="subcellular location">
    <subcellularLocation>
        <location evidence="3">Nucleus</location>
    </subcellularLocation>
</comment>
<comment type="developmental stage">
    <text evidence="2">SP4 gene is transcribed in or before primary spermatocyte stage but is translated at the round spermatid stage.</text>
</comment>
<gene>
    <name type="primary">sp4-a</name>
    <name type="synonym">sp42</name>
</gene>
<gene>
    <name type="primary">sp4-b</name>
    <name type="synonym">sp43</name>
</gene>
<gene>
    <name type="primary">sp4-c</name>
    <name type="synonym">sp44</name>
</gene>
<feature type="initiator methionine" description="Removed" evidence="2">
    <location>
        <position position="1"/>
    </location>
</feature>
<feature type="chain" id="PRO_0000072076" description="Sperm-specific basic nuclear protein SP4">
    <location>
        <begin position="2"/>
        <end position="79"/>
    </location>
</feature>
<feature type="repeat">
    <location>
        <begin position="45"/>
        <end position="52"/>
    </location>
</feature>
<feature type="repeat">
    <location>
        <begin position="53"/>
        <end position="60"/>
    </location>
</feature>
<feature type="region of interest" description="Disordered" evidence="1">
    <location>
        <begin position="1"/>
        <end position="79"/>
    </location>
</feature>
<feature type="compositionally biased region" description="Basic residues" evidence="1">
    <location>
        <begin position="9"/>
        <end position="60"/>
    </location>
</feature>
<feature type="compositionally biased region" description="Basic and acidic residues" evidence="1">
    <location>
        <begin position="61"/>
        <end position="79"/>
    </location>
</feature>
<name>SP4_XENLA</name>
<accession>P24056</accession>
<accession>Q53X49</accession>
<sequence>MSKVSGGSRRTRARRPMSNRRGRRSQSAAHRSRAQRRRRRTGTTRRARTSTARRARTRTARRSDLTRMMARDYGSDYRS</sequence>
<proteinExistence type="evidence at protein level"/>
<keyword id="KW-0903">Direct protein sequencing</keyword>
<keyword id="KW-0539">Nucleus</keyword>
<keyword id="KW-1185">Reference proteome</keyword>
<keyword id="KW-0677">Repeat</keyword>
<organism>
    <name type="scientific">Xenopus laevis</name>
    <name type="common">African clawed frog</name>
    <dbReference type="NCBI Taxonomy" id="8355"/>
    <lineage>
        <taxon>Eukaryota</taxon>
        <taxon>Metazoa</taxon>
        <taxon>Chordata</taxon>
        <taxon>Craniata</taxon>
        <taxon>Vertebrata</taxon>
        <taxon>Euteleostomi</taxon>
        <taxon>Amphibia</taxon>
        <taxon>Batrachia</taxon>
        <taxon>Anura</taxon>
        <taxon>Pipoidea</taxon>
        <taxon>Pipidae</taxon>
        <taxon>Xenopodinae</taxon>
        <taxon>Xenopus</taxon>
        <taxon>Xenopus</taxon>
    </lineage>
</organism>